<feature type="peptide" id="PRO_0000424404" description="Nephilakinin-1">
    <location>
        <begin position="1"/>
        <end position="10"/>
    </location>
</feature>
<feature type="modified residue" description="Arginine amide" evidence="1">
    <location>
        <position position="10"/>
    </location>
</feature>
<protein>
    <recommendedName>
        <fullName>Nephilakinin-1</fullName>
    </recommendedName>
    <alternativeName>
        <fullName>Nephilakinin-I</fullName>
    </alternativeName>
</protein>
<dbReference type="GO" id="GO:0005576">
    <property type="term" value="C:extracellular region"/>
    <property type="evidence" value="ECO:0007669"/>
    <property type="project" value="UniProtKB-SubCell"/>
</dbReference>
<dbReference type="GO" id="GO:0090729">
    <property type="term" value="F:toxin activity"/>
    <property type="evidence" value="ECO:0007669"/>
    <property type="project" value="UniProtKB-KW"/>
</dbReference>
<name>BRK1_TRICX</name>
<accession>P0DM72</accession>
<proteinExistence type="evidence at protein level"/>
<organism>
    <name type="scientific">Trichonephila clavipes</name>
    <name type="common">Golden silk orbweaver</name>
    <name type="synonym">Nephila clavipes</name>
    <dbReference type="NCBI Taxonomy" id="2585209"/>
    <lineage>
        <taxon>Eukaryota</taxon>
        <taxon>Metazoa</taxon>
        <taxon>Ecdysozoa</taxon>
        <taxon>Arthropoda</taxon>
        <taxon>Chelicerata</taxon>
        <taxon>Arachnida</taxon>
        <taxon>Araneae</taxon>
        <taxon>Araneomorphae</taxon>
        <taxon>Entelegynae</taxon>
        <taxon>Araneoidea</taxon>
        <taxon>Nephilidae</taxon>
        <taxon>Trichonephila</taxon>
    </lineage>
</organism>
<evidence type="ECO:0000269" key="1">
    <source>
    </source>
</evidence>
<evidence type="ECO:0000305" key="2"/>
<evidence type="ECO:0000305" key="3">
    <source>
    </source>
</evidence>
<comment type="function">
    <text evidence="1">Causes constriction on isolated rat ileum preparations and relaxation on rat duodenum muscle preparations at amounts higher than bradykinin. Is a partial agonist bradykinin receptor B2 (BDKRB2). Is moderately lethal to honeybees. May be related to the predation of insects by the spider webs.</text>
</comment>
<comment type="subcellular location">
    <subcellularLocation>
        <location>Secreted</location>
    </subcellularLocation>
</comment>
<comment type="toxic dose">
    <text evidence="1">LD(50) is 98 pmoles/mg when injected into honeybees. Dose that causes muscle constriction (ED(50)) is 7 uM. Dose that causes muscle relaxation (ED(50)) is 10 uM.</text>
</comment>
<comment type="miscellaneous">
    <text evidence="3">Has been extracted from the spider web.</text>
</comment>
<comment type="miscellaneous">
    <text evidence="3">Negative results: does not target bradykinin receptor B1 (BDKRB1).</text>
</comment>
<comment type="similarity">
    <text evidence="2">Belongs to the bradykinin-related peptide family.</text>
</comment>
<sequence length="10" mass="1075">GPNPGFSPFR</sequence>
<reference key="1">
    <citation type="journal article" date="2006" name="Peptides">
        <title>Multiple bradykinin-related peptides from the capture web of the spider Nephila clavipes (Araneae, Tetragnatidae).</title>
        <authorList>
            <person name="Volsi E.C."/>
            <person name="Mendes M.A."/>
            <person name="Marques M.R."/>
            <person name="dos Santos L.D."/>
            <person name="Santos K.S."/>
            <person name="de Souza B.M."/>
            <person name="Babieri E.F."/>
            <person name="Palma M.S."/>
        </authorList>
    </citation>
    <scope>PROTEIN SEQUENCE</scope>
    <scope>IDENTIFICATION BY MASS SPECTROMETRY</scope>
    <scope>SYNTHESIS</scope>
    <scope>FUNCTION</scope>
    <scope>BIOASSAY</scope>
    <scope>TOXIC DOSE</scope>
    <scope>AMIDATION AT ARG-10</scope>
</reference>
<keyword id="KW-0027">Amidation</keyword>
<keyword id="KW-0903">Direct protein sequencing</keyword>
<keyword id="KW-1213">G-protein coupled receptor impairing toxin</keyword>
<keyword id="KW-0964">Secreted</keyword>
<keyword id="KW-0800">Toxin</keyword>